<dbReference type="EC" id="2.4.99.-"/>
<dbReference type="EMBL" id="AJ699421">
    <property type="protein sequence ID" value="CAG27883.1"/>
    <property type="molecule type" value="mRNA"/>
</dbReference>
<dbReference type="RefSeq" id="NP_001001163.1">
    <property type="nucleotide sequence ID" value="NM_001001163.1"/>
</dbReference>
<dbReference type="SMR" id="Q6ZXC9"/>
<dbReference type="FunCoup" id="Q6ZXC9">
    <property type="interactions" value="47"/>
</dbReference>
<dbReference type="STRING" id="9913.ENSBTAP00000028590"/>
<dbReference type="CAZy" id="GT29">
    <property type="family name" value="Glycosyltransferase Family 29"/>
</dbReference>
<dbReference type="GlyCosmos" id="Q6ZXC9">
    <property type="glycosylation" value="5 sites, No reported glycans"/>
</dbReference>
<dbReference type="GlyGen" id="Q6ZXC9">
    <property type="glycosylation" value="5 sites"/>
</dbReference>
<dbReference type="PaxDb" id="9913-ENSBTAP00000028590"/>
<dbReference type="GeneID" id="407768"/>
<dbReference type="KEGG" id="bta:407768"/>
<dbReference type="CTD" id="7903"/>
<dbReference type="eggNOG" id="KOG2692">
    <property type="taxonomic scope" value="Eukaryota"/>
</dbReference>
<dbReference type="InParanoid" id="Q6ZXC9"/>
<dbReference type="OrthoDB" id="10264956at2759"/>
<dbReference type="Proteomes" id="UP000009136">
    <property type="component" value="Unplaced"/>
</dbReference>
<dbReference type="GO" id="GO:0005576">
    <property type="term" value="C:extracellular region"/>
    <property type="evidence" value="ECO:0007669"/>
    <property type="project" value="UniProtKB-SubCell"/>
</dbReference>
<dbReference type="GO" id="GO:0000139">
    <property type="term" value="C:Golgi membrane"/>
    <property type="evidence" value="ECO:0007669"/>
    <property type="project" value="UniProtKB-SubCell"/>
</dbReference>
<dbReference type="GO" id="GO:0003828">
    <property type="term" value="F:alpha-N-acetylneuraminate alpha-2,8-sialyltransferase activity"/>
    <property type="evidence" value="ECO:0000250"/>
    <property type="project" value="AgBase"/>
</dbReference>
<dbReference type="GO" id="GO:0008373">
    <property type="term" value="F:sialyltransferase activity"/>
    <property type="evidence" value="ECO:0000250"/>
    <property type="project" value="UniProtKB"/>
</dbReference>
<dbReference type="GO" id="GO:0006491">
    <property type="term" value="P:N-glycan processing"/>
    <property type="evidence" value="ECO:0000318"/>
    <property type="project" value="GO_Central"/>
</dbReference>
<dbReference type="GO" id="GO:0009311">
    <property type="term" value="P:oligosaccharide metabolic process"/>
    <property type="evidence" value="ECO:0000318"/>
    <property type="project" value="GO_Central"/>
</dbReference>
<dbReference type="GO" id="GO:0006486">
    <property type="term" value="P:protein glycosylation"/>
    <property type="evidence" value="ECO:0000318"/>
    <property type="project" value="GO_Central"/>
</dbReference>
<dbReference type="GO" id="GO:0097503">
    <property type="term" value="P:sialylation"/>
    <property type="evidence" value="ECO:0000250"/>
    <property type="project" value="UniProtKB"/>
</dbReference>
<dbReference type="CDD" id="cd23988">
    <property type="entry name" value="GT29_ST8SIA4"/>
    <property type="match status" value="1"/>
</dbReference>
<dbReference type="FunFam" id="3.90.1480.20:FF:000001">
    <property type="entry name" value="ST8 alpha-N-acetyl-neuraminide alpha-2,8-sialyltransferase 2"/>
    <property type="match status" value="1"/>
</dbReference>
<dbReference type="Gene3D" id="3.90.1480.20">
    <property type="entry name" value="Glycosyl transferase family 29"/>
    <property type="match status" value="1"/>
</dbReference>
<dbReference type="InterPro" id="IPR001675">
    <property type="entry name" value="Glyco_trans_29"/>
</dbReference>
<dbReference type="InterPro" id="IPR050943">
    <property type="entry name" value="Glycosyltr_29_Sialyltrsf"/>
</dbReference>
<dbReference type="InterPro" id="IPR038578">
    <property type="entry name" value="GT29-like_sf"/>
</dbReference>
<dbReference type="InterPro" id="IPR012163">
    <property type="entry name" value="Sialyl_trans"/>
</dbReference>
<dbReference type="PANTHER" id="PTHR11987">
    <property type="entry name" value="ALPHA-2,8-SIALYLTRANSFERASE"/>
    <property type="match status" value="1"/>
</dbReference>
<dbReference type="PANTHER" id="PTHR11987:SF48">
    <property type="entry name" value="CMP-N-ACETYLNEURAMINATE-POLY-ALPHA-2,8-SIALYLTRANSFERASE"/>
    <property type="match status" value="1"/>
</dbReference>
<dbReference type="Pfam" id="PF00777">
    <property type="entry name" value="Glyco_transf_29"/>
    <property type="match status" value="1"/>
</dbReference>
<dbReference type="PIRSF" id="PIRSF005557">
    <property type="entry name" value="Sialyl_trans"/>
    <property type="match status" value="1"/>
</dbReference>
<keyword id="KW-1015">Disulfide bond</keyword>
<keyword id="KW-0325">Glycoprotein</keyword>
<keyword id="KW-0328">Glycosyltransferase</keyword>
<keyword id="KW-0333">Golgi apparatus</keyword>
<keyword id="KW-0472">Membrane</keyword>
<keyword id="KW-1185">Reference proteome</keyword>
<keyword id="KW-0964">Secreted</keyword>
<keyword id="KW-0735">Signal-anchor</keyword>
<keyword id="KW-0808">Transferase</keyword>
<keyword id="KW-0812">Transmembrane</keyword>
<keyword id="KW-1133">Transmembrane helix</keyword>
<name>SIA8D_BOVIN</name>
<proteinExistence type="evidence at transcript level"/>
<comment type="function">
    <text evidence="2">Catalyzes the transfer of a sialic acid from a CMP-linked sialic acid donor onto a terminal alpha-2,3-, alpha-2,6-, or alpha-2,8-linked sialic acid of an N-linked glycan protein acceptor through alpha-2,8-linkages. Therefore, participates in polysialic acid synthesis on various sialylated N-acetyllactosaminyl oligosaccharides, including NCAM1 N-glycans, FETUB N-glycans and AHSG. It is noteworthy that alpha-2,3-linked sialic acid is apparently a better acceptor than alpha-2,6-linked sialic acid.</text>
</comment>
<comment type="catalytic activity">
    <reaction evidence="2">
        <text>[N-acetyl-alpha-D-neuraminosyl-(2-&gt;8)](n) + CMP-N-acetyl-beta-neuraminate = [N-acetyl-alpha-D-neuraminosyl-(2-&gt;8)](n+1) + CMP + H(+)</text>
        <dbReference type="Rhea" id="RHEA:77367"/>
        <dbReference type="Rhea" id="RHEA-COMP:14315"/>
        <dbReference type="Rhea" id="RHEA-COMP:18878"/>
        <dbReference type="ChEBI" id="CHEBI:15378"/>
        <dbReference type="ChEBI" id="CHEBI:57812"/>
        <dbReference type="ChEBI" id="CHEBI:60377"/>
        <dbReference type="ChEBI" id="CHEBI:139252"/>
    </reaction>
    <physiologicalReaction direction="left-to-right" evidence="2">
        <dbReference type="Rhea" id="RHEA:77368"/>
    </physiologicalReaction>
</comment>
<comment type="subcellular location">
    <subcellularLocation>
        <location evidence="2">Golgi apparatus membrane</location>
        <topology evidence="2">Single-pass type II membrane protein</topology>
    </subcellularLocation>
    <subcellularLocation>
        <location evidence="2">Secreted</location>
    </subcellularLocation>
</comment>
<comment type="PTM">
    <text evidence="2">Autopolysialylated.</text>
</comment>
<comment type="similarity">
    <text evidence="4">Belongs to the glycosyltransferase 29 family.</text>
</comment>
<organism>
    <name type="scientific">Bos taurus</name>
    <name type="common">Bovine</name>
    <dbReference type="NCBI Taxonomy" id="9913"/>
    <lineage>
        <taxon>Eukaryota</taxon>
        <taxon>Metazoa</taxon>
        <taxon>Chordata</taxon>
        <taxon>Craniata</taxon>
        <taxon>Vertebrata</taxon>
        <taxon>Euteleostomi</taxon>
        <taxon>Mammalia</taxon>
        <taxon>Eutheria</taxon>
        <taxon>Laurasiatheria</taxon>
        <taxon>Artiodactyla</taxon>
        <taxon>Ruminantia</taxon>
        <taxon>Pecora</taxon>
        <taxon>Bovidae</taxon>
        <taxon>Bovinae</taxon>
        <taxon>Bos</taxon>
    </lineage>
</organism>
<feature type="chain" id="PRO_0000247931" description="CMP-N-acetylneuraminate-poly-alpha-2,8-sialyltransferase">
    <location>
        <begin position="1"/>
        <end position="359"/>
    </location>
</feature>
<feature type="topological domain" description="Cytoplasmic" evidence="3">
    <location>
        <begin position="1"/>
        <end position="7"/>
    </location>
</feature>
<feature type="transmembrane region" description="Helical; Signal-anchor for type II membrane protein" evidence="3">
    <location>
        <begin position="8"/>
        <end position="20"/>
    </location>
</feature>
<feature type="topological domain" description="Lumenal" evidence="3">
    <location>
        <begin position="21"/>
        <end position="359"/>
    </location>
</feature>
<feature type="active site" description="Proton donor/acceptor" evidence="1">
    <location>
        <position position="331"/>
    </location>
</feature>
<feature type="binding site" evidence="1">
    <location>
        <position position="147"/>
    </location>
    <ligand>
        <name>CMP-N-acetyl-beta-neuraminate</name>
        <dbReference type="ChEBI" id="CHEBI:57812"/>
    </ligand>
</feature>
<feature type="binding site" evidence="1">
    <location>
        <position position="170"/>
    </location>
    <ligand>
        <name>CMP-N-acetyl-beta-neuraminate</name>
        <dbReference type="ChEBI" id="CHEBI:57812"/>
    </ligand>
</feature>
<feature type="binding site" evidence="1">
    <location>
        <position position="279"/>
    </location>
    <ligand>
        <name>CMP-N-acetyl-beta-neuraminate</name>
        <dbReference type="ChEBI" id="CHEBI:57812"/>
    </ligand>
</feature>
<feature type="binding site" evidence="1">
    <location>
        <position position="280"/>
    </location>
    <ligand>
        <name>CMP-N-acetyl-beta-neuraminate</name>
        <dbReference type="ChEBI" id="CHEBI:57812"/>
    </ligand>
</feature>
<feature type="binding site" evidence="1">
    <location>
        <position position="281"/>
    </location>
    <ligand>
        <name>CMP-N-acetyl-beta-neuraminate</name>
        <dbReference type="ChEBI" id="CHEBI:57812"/>
    </ligand>
</feature>
<feature type="binding site" evidence="1">
    <location>
        <position position="301"/>
    </location>
    <ligand>
        <name>CMP-N-acetyl-beta-neuraminate</name>
        <dbReference type="ChEBI" id="CHEBI:57812"/>
    </ligand>
</feature>
<feature type="glycosylation site" description="N-linked (GlcNAc...) asparagine" evidence="3">
    <location>
        <position position="50"/>
    </location>
</feature>
<feature type="glycosylation site" description="N-linked (GlcNAc...) asparagine" evidence="3">
    <location>
        <position position="74"/>
    </location>
</feature>
<feature type="glycosylation site" description="N-linked (GlcNAc...) asparagine" evidence="3">
    <location>
        <position position="119"/>
    </location>
</feature>
<feature type="glycosylation site" description="N-linked (GlcNAc...) asparagine" evidence="3">
    <location>
        <position position="204"/>
    </location>
</feature>
<feature type="glycosylation site" description="N-linked (GlcNAc...) asparagine" evidence="3">
    <location>
        <position position="219"/>
    </location>
</feature>
<feature type="disulfide bond" evidence="1">
    <location>
        <begin position="142"/>
        <end position="292"/>
    </location>
</feature>
<feature type="disulfide bond" evidence="1">
    <location>
        <begin position="156"/>
        <end position="356"/>
    </location>
</feature>
<protein>
    <recommendedName>
        <fullName>CMP-N-acetylneuraminate-poly-alpha-2,8-sialyltransferase</fullName>
        <ecNumber>2.4.99.-</ecNumber>
    </recommendedName>
    <alternativeName>
        <fullName>Alpha-2,8-sialyltransferase 8D</fullName>
    </alternativeName>
    <alternativeName>
        <fullName>Polysialyltransferase-1</fullName>
    </alternativeName>
    <alternativeName>
        <fullName>Sialyltransferase 8D</fullName>
        <shortName>SIAT8-D</shortName>
    </alternativeName>
    <alternativeName>
        <fullName>Sialyltransferase St8Sia IV</fullName>
        <shortName>ST8SiaIV</shortName>
    </alternativeName>
</protein>
<sequence>MRSIRKRWTICTISLLLIFYKTKEMARTEEHQETQLIGDGELSLSRSLVNSSDKIIRKAGSSIFQHSVEGGKINSSLVLEIRKNILRFLDAERDVSVVKSSFKPGDVIHYVLDRRRTLNISQDLHSLLPEVSPMKNRRFKTCAVVGNSGILLDSECGKEIDSHNFVIRCNLAPVVEFAADVGTKSDFITMNPSVVQRAFGGFRNESDREKFVHRLSMLNDSVLWIPAFMVKGGEKHVEWVNALILKNKLKVRTAYPSLRLIHAVRGYWLTNKVPIKRPSTGLLMYTLATRFCDEIHLYGFWPFPKDLNGKAVKYHYYDDLKYRYFSNASPHRMPLEFKTLNVLHNRGALKLTTGKCIKQ</sequence>
<gene>
    <name type="primary">ST8SIA4</name>
    <name type="synonym">SIAT8D</name>
</gene>
<reference key="1">
    <citation type="journal article" date="2005" name="Glycobiology">
        <title>The animal sialyltransferases and sialyltransferase-related genes: a phylogenetic approach.</title>
        <authorList>
            <person name="Harduin-Lepers A."/>
            <person name="Mollicone R."/>
            <person name="Delannoy P."/>
            <person name="Oriol R."/>
        </authorList>
    </citation>
    <scope>NUCLEOTIDE SEQUENCE [MRNA]</scope>
</reference>
<accession>Q6ZXC9</accession>
<evidence type="ECO:0000250" key="1">
    <source>
        <dbReference type="UniProtKB" id="O43173"/>
    </source>
</evidence>
<evidence type="ECO:0000250" key="2">
    <source>
        <dbReference type="UniProtKB" id="Q92187"/>
    </source>
</evidence>
<evidence type="ECO:0000255" key="3"/>
<evidence type="ECO:0000305" key="4"/>